<name>MSCL_PORG3</name>
<accession>B2RJU3</accession>
<organism>
    <name type="scientific">Porphyromonas gingivalis (strain ATCC 33277 / DSM 20709 / CIP 103683 / JCM 12257 / NCTC 11834 / 2561)</name>
    <dbReference type="NCBI Taxonomy" id="431947"/>
    <lineage>
        <taxon>Bacteria</taxon>
        <taxon>Pseudomonadati</taxon>
        <taxon>Bacteroidota</taxon>
        <taxon>Bacteroidia</taxon>
        <taxon>Bacteroidales</taxon>
        <taxon>Porphyromonadaceae</taxon>
        <taxon>Porphyromonas</taxon>
    </lineage>
</organism>
<protein>
    <recommendedName>
        <fullName evidence="1">Large-conductance mechanosensitive channel</fullName>
    </recommendedName>
</protein>
<gene>
    <name evidence="1" type="primary">mscL</name>
    <name type="ordered locus">PGN_1119</name>
</gene>
<comment type="function">
    <text evidence="1">Channel that opens in response to stretch forces in the membrane lipid bilayer. May participate in the regulation of osmotic pressure changes within the cell.</text>
</comment>
<comment type="subunit">
    <text evidence="1">Homopentamer.</text>
</comment>
<comment type="subcellular location">
    <subcellularLocation>
        <location evidence="1">Cell inner membrane</location>
        <topology evidence="1">Multi-pass membrane protein</topology>
    </subcellularLocation>
</comment>
<comment type="similarity">
    <text evidence="1">Belongs to the MscL family.</text>
</comment>
<keyword id="KW-0997">Cell inner membrane</keyword>
<keyword id="KW-1003">Cell membrane</keyword>
<keyword id="KW-0407">Ion channel</keyword>
<keyword id="KW-0406">Ion transport</keyword>
<keyword id="KW-0472">Membrane</keyword>
<keyword id="KW-0812">Transmembrane</keyword>
<keyword id="KW-1133">Transmembrane helix</keyword>
<keyword id="KW-0813">Transport</keyword>
<evidence type="ECO:0000255" key="1">
    <source>
        <dbReference type="HAMAP-Rule" id="MF_00115"/>
    </source>
</evidence>
<sequence length="139" mass="15135">MKKFIQDFKAFALKGNVVDMAVGVIIGGAFGKIVTSLVNDIMMPPISLLTGGVNFTDLKLVLSKAVVEGGEVVKPEVSWNYGNFIQTTVDFLILAFVIFLMIKAIMAAKRKEEEAPAAPAPTPPEIELLTEIRDLLKKQ</sequence>
<dbReference type="EMBL" id="AP009380">
    <property type="protein sequence ID" value="BAG33638.1"/>
    <property type="molecule type" value="Genomic_DNA"/>
</dbReference>
<dbReference type="RefSeq" id="WP_004585532.1">
    <property type="nucleotide sequence ID" value="NZ_CP025930.1"/>
</dbReference>
<dbReference type="SMR" id="B2RJU3"/>
<dbReference type="GeneID" id="29256325"/>
<dbReference type="KEGG" id="pgn:PGN_1119"/>
<dbReference type="eggNOG" id="COG1970">
    <property type="taxonomic scope" value="Bacteria"/>
</dbReference>
<dbReference type="HOGENOM" id="CLU_095787_0_0_10"/>
<dbReference type="OrthoDB" id="9810350at2"/>
<dbReference type="BioCyc" id="PGIN431947:G1G2V-1279-MONOMER"/>
<dbReference type="Proteomes" id="UP000008842">
    <property type="component" value="Chromosome"/>
</dbReference>
<dbReference type="GO" id="GO:0005886">
    <property type="term" value="C:plasma membrane"/>
    <property type="evidence" value="ECO:0007669"/>
    <property type="project" value="UniProtKB-SubCell"/>
</dbReference>
<dbReference type="GO" id="GO:0008381">
    <property type="term" value="F:mechanosensitive monoatomic ion channel activity"/>
    <property type="evidence" value="ECO:0007669"/>
    <property type="project" value="UniProtKB-UniRule"/>
</dbReference>
<dbReference type="FunFam" id="1.10.1200.120:FF:000001">
    <property type="entry name" value="Large-conductance mechanosensitive channel"/>
    <property type="match status" value="1"/>
</dbReference>
<dbReference type="Gene3D" id="1.10.1200.120">
    <property type="entry name" value="Large-conductance mechanosensitive channel, MscL, domain 1"/>
    <property type="match status" value="1"/>
</dbReference>
<dbReference type="HAMAP" id="MF_00115">
    <property type="entry name" value="MscL"/>
    <property type="match status" value="1"/>
</dbReference>
<dbReference type="InterPro" id="IPR019823">
    <property type="entry name" value="Mechanosensitive_channel_CS"/>
</dbReference>
<dbReference type="InterPro" id="IPR001185">
    <property type="entry name" value="MS_channel"/>
</dbReference>
<dbReference type="InterPro" id="IPR037673">
    <property type="entry name" value="MSC/AndL"/>
</dbReference>
<dbReference type="InterPro" id="IPR036019">
    <property type="entry name" value="MscL_channel"/>
</dbReference>
<dbReference type="NCBIfam" id="TIGR00220">
    <property type="entry name" value="mscL"/>
    <property type="match status" value="1"/>
</dbReference>
<dbReference type="NCBIfam" id="NF001843">
    <property type="entry name" value="PRK00567.1-4"/>
    <property type="match status" value="1"/>
</dbReference>
<dbReference type="NCBIfam" id="NF010557">
    <property type="entry name" value="PRK13952.1"/>
    <property type="match status" value="1"/>
</dbReference>
<dbReference type="PANTHER" id="PTHR30266:SF2">
    <property type="entry name" value="LARGE-CONDUCTANCE MECHANOSENSITIVE CHANNEL"/>
    <property type="match status" value="1"/>
</dbReference>
<dbReference type="PANTHER" id="PTHR30266">
    <property type="entry name" value="MECHANOSENSITIVE CHANNEL MSCL"/>
    <property type="match status" value="1"/>
</dbReference>
<dbReference type="Pfam" id="PF01741">
    <property type="entry name" value="MscL"/>
    <property type="match status" value="1"/>
</dbReference>
<dbReference type="PRINTS" id="PR01264">
    <property type="entry name" value="MECHCHANNEL"/>
</dbReference>
<dbReference type="SUPFAM" id="SSF81330">
    <property type="entry name" value="Gated mechanosensitive channel"/>
    <property type="match status" value="1"/>
</dbReference>
<dbReference type="PROSITE" id="PS01327">
    <property type="entry name" value="MSCL"/>
    <property type="match status" value="1"/>
</dbReference>
<proteinExistence type="inferred from homology"/>
<reference key="1">
    <citation type="journal article" date="2008" name="DNA Res.">
        <title>Determination of the genome sequence of Porphyromonas gingivalis strain ATCC 33277 and genomic comparison with strain W83 revealed extensive genome rearrangements in P. gingivalis.</title>
        <authorList>
            <person name="Naito M."/>
            <person name="Hirakawa H."/>
            <person name="Yamashita A."/>
            <person name="Ohara N."/>
            <person name="Shoji M."/>
            <person name="Yukitake H."/>
            <person name="Nakayama K."/>
            <person name="Toh H."/>
            <person name="Yoshimura F."/>
            <person name="Kuhara S."/>
            <person name="Hattori M."/>
            <person name="Hayashi T."/>
            <person name="Nakayama K."/>
        </authorList>
    </citation>
    <scope>NUCLEOTIDE SEQUENCE [LARGE SCALE GENOMIC DNA]</scope>
    <source>
        <strain>ATCC 33277 / DSM 20709 / CIP 103683 / JCM 12257 / NCTC 11834 / 2561</strain>
    </source>
</reference>
<feature type="chain" id="PRO_1000094912" description="Large-conductance mechanosensitive channel">
    <location>
        <begin position="1"/>
        <end position="139"/>
    </location>
</feature>
<feature type="transmembrane region" description="Helical" evidence="1">
    <location>
        <begin position="17"/>
        <end position="37"/>
    </location>
</feature>
<feature type="transmembrane region" description="Helical" evidence="1">
    <location>
        <begin position="88"/>
        <end position="108"/>
    </location>
</feature>